<reference key="1">
    <citation type="journal article" date="2001" name="Science">
        <title>The genome of the natural genetic engineer Agrobacterium tumefaciens C58.</title>
        <authorList>
            <person name="Wood D.W."/>
            <person name="Setubal J.C."/>
            <person name="Kaul R."/>
            <person name="Monks D.E."/>
            <person name="Kitajima J.P."/>
            <person name="Okura V.K."/>
            <person name="Zhou Y."/>
            <person name="Chen L."/>
            <person name="Wood G.E."/>
            <person name="Almeida N.F. Jr."/>
            <person name="Woo L."/>
            <person name="Chen Y."/>
            <person name="Paulsen I.T."/>
            <person name="Eisen J.A."/>
            <person name="Karp P.D."/>
            <person name="Bovee D. Sr."/>
            <person name="Chapman P."/>
            <person name="Clendenning J."/>
            <person name="Deatherage G."/>
            <person name="Gillet W."/>
            <person name="Grant C."/>
            <person name="Kutyavin T."/>
            <person name="Levy R."/>
            <person name="Li M.-J."/>
            <person name="McClelland E."/>
            <person name="Palmieri A."/>
            <person name="Raymond C."/>
            <person name="Rouse G."/>
            <person name="Saenphimmachak C."/>
            <person name="Wu Z."/>
            <person name="Romero P."/>
            <person name="Gordon D."/>
            <person name="Zhang S."/>
            <person name="Yoo H."/>
            <person name="Tao Y."/>
            <person name="Biddle P."/>
            <person name="Jung M."/>
            <person name="Krespan W."/>
            <person name="Perry M."/>
            <person name="Gordon-Kamm B."/>
            <person name="Liao L."/>
            <person name="Kim S."/>
            <person name="Hendrick C."/>
            <person name="Zhao Z.-Y."/>
            <person name="Dolan M."/>
            <person name="Chumley F."/>
            <person name="Tingey S.V."/>
            <person name="Tomb J.-F."/>
            <person name="Gordon M.P."/>
            <person name="Olson M.V."/>
            <person name="Nester E.W."/>
        </authorList>
    </citation>
    <scope>NUCLEOTIDE SEQUENCE [LARGE SCALE GENOMIC DNA]</scope>
    <source>
        <strain>C58 / ATCC 33970</strain>
    </source>
</reference>
<reference key="2">
    <citation type="journal article" date="2001" name="Science">
        <title>Genome sequence of the plant pathogen and biotechnology agent Agrobacterium tumefaciens C58.</title>
        <authorList>
            <person name="Goodner B."/>
            <person name="Hinkle G."/>
            <person name="Gattung S."/>
            <person name="Miller N."/>
            <person name="Blanchard M."/>
            <person name="Qurollo B."/>
            <person name="Goldman B.S."/>
            <person name="Cao Y."/>
            <person name="Askenazi M."/>
            <person name="Halling C."/>
            <person name="Mullin L."/>
            <person name="Houmiel K."/>
            <person name="Gordon J."/>
            <person name="Vaudin M."/>
            <person name="Iartchouk O."/>
            <person name="Epp A."/>
            <person name="Liu F."/>
            <person name="Wollam C."/>
            <person name="Allinger M."/>
            <person name="Doughty D."/>
            <person name="Scott C."/>
            <person name="Lappas C."/>
            <person name="Markelz B."/>
            <person name="Flanagan C."/>
            <person name="Crowell C."/>
            <person name="Gurson J."/>
            <person name="Lomo C."/>
            <person name="Sear C."/>
            <person name="Strub G."/>
            <person name="Cielo C."/>
            <person name="Slater S."/>
        </authorList>
    </citation>
    <scope>NUCLEOTIDE SEQUENCE [LARGE SCALE GENOMIC DNA]</scope>
    <source>
        <strain>C58 / ATCC 33970</strain>
    </source>
</reference>
<gene>
    <name evidence="1" type="primary">rnc</name>
    <name type="ordered locus">Atu1035</name>
    <name type="ORF">AGR_C_1906</name>
</gene>
<feature type="chain" id="PRO_0000180369" description="Ribonuclease 3">
    <location>
        <begin position="1"/>
        <end position="239"/>
    </location>
</feature>
<feature type="domain" description="RNase III" evidence="1">
    <location>
        <begin position="12"/>
        <end position="137"/>
    </location>
</feature>
<feature type="domain" description="DRBM" evidence="1">
    <location>
        <begin position="162"/>
        <end position="231"/>
    </location>
</feature>
<feature type="active site" evidence="1">
    <location>
        <position position="54"/>
    </location>
</feature>
<feature type="active site" evidence="1">
    <location>
        <position position="126"/>
    </location>
</feature>
<feature type="binding site" evidence="1">
    <location>
        <position position="50"/>
    </location>
    <ligand>
        <name>Mg(2+)</name>
        <dbReference type="ChEBI" id="CHEBI:18420"/>
    </ligand>
</feature>
<feature type="binding site" evidence="1">
    <location>
        <position position="123"/>
    </location>
    <ligand>
        <name>Mg(2+)</name>
        <dbReference type="ChEBI" id="CHEBI:18420"/>
    </ligand>
</feature>
<feature type="binding site" evidence="1">
    <location>
        <position position="126"/>
    </location>
    <ligand>
        <name>Mg(2+)</name>
        <dbReference type="ChEBI" id="CHEBI:18420"/>
    </ligand>
</feature>
<protein>
    <recommendedName>
        <fullName evidence="1">Ribonuclease 3</fullName>
        <ecNumber evidence="1">3.1.26.3</ecNumber>
    </recommendedName>
    <alternativeName>
        <fullName evidence="1">Ribonuclease III</fullName>
        <shortName evidence="1">RNase III</shortName>
    </alternativeName>
</protein>
<sequence>MSKTKPLSADEISRLEALIGYEFKEKARLDRALTHASARSAAAGNYERLEFLGDRVLGLCVAELLFSTFRNASEGELSVRLNQLVSAESCAAIGDEMGLHNFIRTGSDVKKLTGKAMLNVRADVVESLIATLYLDGGLEASRKFILKYWQGRATSVDAGRRDAKTELQEWAHARFAATPAYRVDDRSGPDHDPSFTVTVEIPGVKPETGVERSKRAAEQVAATRLLEREGVWRKSPTGN</sequence>
<evidence type="ECO:0000255" key="1">
    <source>
        <dbReference type="HAMAP-Rule" id="MF_00104"/>
    </source>
</evidence>
<comment type="function">
    <text evidence="1">Digests double-stranded RNA. Involved in the processing of primary rRNA transcript to yield the immediate precursors to the large and small rRNAs (23S and 16S). Processes some mRNAs, and tRNAs when they are encoded in the rRNA operon. Processes pre-crRNA and tracrRNA of type II CRISPR loci if present in the organism.</text>
</comment>
<comment type="catalytic activity">
    <reaction evidence="1">
        <text>Endonucleolytic cleavage to 5'-phosphomonoester.</text>
        <dbReference type="EC" id="3.1.26.3"/>
    </reaction>
</comment>
<comment type="cofactor">
    <cofactor evidence="1">
        <name>Mg(2+)</name>
        <dbReference type="ChEBI" id="CHEBI:18420"/>
    </cofactor>
</comment>
<comment type="subunit">
    <text evidence="1">Homodimer.</text>
</comment>
<comment type="subcellular location">
    <subcellularLocation>
        <location evidence="1">Cytoplasm</location>
    </subcellularLocation>
</comment>
<comment type="similarity">
    <text evidence="1">Belongs to the ribonuclease III family.</text>
</comment>
<keyword id="KW-0963">Cytoplasm</keyword>
<keyword id="KW-0255">Endonuclease</keyword>
<keyword id="KW-0378">Hydrolase</keyword>
<keyword id="KW-0460">Magnesium</keyword>
<keyword id="KW-0479">Metal-binding</keyword>
<keyword id="KW-0507">mRNA processing</keyword>
<keyword id="KW-0540">Nuclease</keyword>
<keyword id="KW-1185">Reference proteome</keyword>
<keyword id="KW-0694">RNA-binding</keyword>
<keyword id="KW-0698">rRNA processing</keyword>
<keyword id="KW-0699">rRNA-binding</keyword>
<keyword id="KW-0819">tRNA processing</keyword>
<proteinExistence type="inferred from homology"/>
<name>RNC_AGRFC</name>
<dbReference type="EC" id="3.1.26.3" evidence="1"/>
<dbReference type="EMBL" id="AE007869">
    <property type="protein sequence ID" value="AAK86843.2"/>
    <property type="molecule type" value="Genomic_DNA"/>
</dbReference>
<dbReference type="PIR" id="AB2704">
    <property type="entry name" value="AB2704"/>
</dbReference>
<dbReference type="PIR" id="B97486">
    <property type="entry name" value="B97486"/>
</dbReference>
<dbReference type="RefSeq" id="NP_354058.2">
    <property type="nucleotide sequence ID" value="NC_003062.2"/>
</dbReference>
<dbReference type="RefSeq" id="WP_010971346.1">
    <property type="nucleotide sequence ID" value="NC_003062.2"/>
</dbReference>
<dbReference type="SMR" id="Q8UGK2"/>
<dbReference type="STRING" id="176299.Atu1035"/>
<dbReference type="EnsemblBacteria" id="AAK86843">
    <property type="protein sequence ID" value="AAK86843"/>
    <property type="gene ID" value="Atu1035"/>
</dbReference>
<dbReference type="GeneID" id="1133073"/>
<dbReference type="KEGG" id="atu:Atu1035"/>
<dbReference type="PATRIC" id="fig|176299.10.peg.1047"/>
<dbReference type="eggNOG" id="COG0571">
    <property type="taxonomic scope" value="Bacteria"/>
</dbReference>
<dbReference type="HOGENOM" id="CLU_000907_1_1_5"/>
<dbReference type="OrthoDB" id="9805026at2"/>
<dbReference type="PhylomeDB" id="Q8UGK2"/>
<dbReference type="BioCyc" id="AGRO:ATU1035-MONOMER"/>
<dbReference type="Proteomes" id="UP000000813">
    <property type="component" value="Chromosome circular"/>
</dbReference>
<dbReference type="GO" id="GO:0005737">
    <property type="term" value="C:cytoplasm"/>
    <property type="evidence" value="ECO:0007669"/>
    <property type="project" value="UniProtKB-SubCell"/>
</dbReference>
<dbReference type="GO" id="GO:0003725">
    <property type="term" value="F:double-stranded RNA binding"/>
    <property type="evidence" value="ECO:0007669"/>
    <property type="project" value="TreeGrafter"/>
</dbReference>
<dbReference type="GO" id="GO:0046872">
    <property type="term" value="F:metal ion binding"/>
    <property type="evidence" value="ECO:0007669"/>
    <property type="project" value="UniProtKB-KW"/>
</dbReference>
<dbReference type="GO" id="GO:0004525">
    <property type="term" value="F:ribonuclease III activity"/>
    <property type="evidence" value="ECO:0007669"/>
    <property type="project" value="UniProtKB-UniRule"/>
</dbReference>
<dbReference type="GO" id="GO:0019843">
    <property type="term" value="F:rRNA binding"/>
    <property type="evidence" value="ECO:0007669"/>
    <property type="project" value="UniProtKB-KW"/>
</dbReference>
<dbReference type="GO" id="GO:0006397">
    <property type="term" value="P:mRNA processing"/>
    <property type="evidence" value="ECO:0007669"/>
    <property type="project" value="UniProtKB-UniRule"/>
</dbReference>
<dbReference type="GO" id="GO:0010468">
    <property type="term" value="P:regulation of gene expression"/>
    <property type="evidence" value="ECO:0007669"/>
    <property type="project" value="TreeGrafter"/>
</dbReference>
<dbReference type="GO" id="GO:0006364">
    <property type="term" value="P:rRNA processing"/>
    <property type="evidence" value="ECO:0007669"/>
    <property type="project" value="UniProtKB-UniRule"/>
</dbReference>
<dbReference type="GO" id="GO:0008033">
    <property type="term" value="P:tRNA processing"/>
    <property type="evidence" value="ECO:0007669"/>
    <property type="project" value="UniProtKB-KW"/>
</dbReference>
<dbReference type="CDD" id="cd10845">
    <property type="entry name" value="DSRM_RNAse_III_family"/>
    <property type="match status" value="1"/>
</dbReference>
<dbReference type="CDD" id="cd00593">
    <property type="entry name" value="RIBOc"/>
    <property type="match status" value="1"/>
</dbReference>
<dbReference type="Gene3D" id="3.30.160.20">
    <property type="match status" value="1"/>
</dbReference>
<dbReference type="Gene3D" id="1.10.1520.10">
    <property type="entry name" value="Ribonuclease III domain"/>
    <property type="match status" value="1"/>
</dbReference>
<dbReference type="HAMAP" id="MF_00104">
    <property type="entry name" value="RNase_III"/>
    <property type="match status" value="1"/>
</dbReference>
<dbReference type="InterPro" id="IPR014720">
    <property type="entry name" value="dsRBD_dom"/>
</dbReference>
<dbReference type="InterPro" id="IPR011907">
    <property type="entry name" value="RNase_III"/>
</dbReference>
<dbReference type="InterPro" id="IPR000999">
    <property type="entry name" value="RNase_III_dom"/>
</dbReference>
<dbReference type="InterPro" id="IPR036389">
    <property type="entry name" value="RNase_III_sf"/>
</dbReference>
<dbReference type="NCBIfam" id="TIGR02191">
    <property type="entry name" value="RNaseIII"/>
    <property type="match status" value="1"/>
</dbReference>
<dbReference type="PANTHER" id="PTHR11207:SF0">
    <property type="entry name" value="RIBONUCLEASE 3"/>
    <property type="match status" value="1"/>
</dbReference>
<dbReference type="PANTHER" id="PTHR11207">
    <property type="entry name" value="RIBONUCLEASE III"/>
    <property type="match status" value="1"/>
</dbReference>
<dbReference type="Pfam" id="PF00035">
    <property type="entry name" value="dsrm"/>
    <property type="match status" value="1"/>
</dbReference>
<dbReference type="Pfam" id="PF14622">
    <property type="entry name" value="Ribonucleas_3_3"/>
    <property type="match status" value="1"/>
</dbReference>
<dbReference type="SMART" id="SM00358">
    <property type="entry name" value="DSRM"/>
    <property type="match status" value="1"/>
</dbReference>
<dbReference type="SMART" id="SM00535">
    <property type="entry name" value="RIBOc"/>
    <property type="match status" value="1"/>
</dbReference>
<dbReference type="SUPFAM" id="SSF54768">
    <property type="entry name" value="dsRNA-binding domain-like"/>
    <property type="match status" value="1"/>
</dbReference>
<dbReference type="SUPFAM" id="SSF69065">
    <property type="entry name" value="RNase III domain-like"/>
    <property type="match status" value="1"/>
</dbReference>
<dbReference type="PROSITE" id="PS50137">
    <property type="entry name" value="DS_RBD"/>
    <property type="match status" value="1"/>
</dbReference>
<dbReference type="PROSITE" id="PS00517">
    <property type="entry name" value="RNASE_3_1"/>
    <property type="match status" value="1"/>
</dbReference>
<dbReference type="PROSITE" id="PS50142">
    <property type="entry name" value="RNASE_3_2"/>
    <property type="match status" value="1"/>
</dbReference>
<organism>
    <name type="scientific">Agrobacterium fabrum (strain C58 / ATCC 33970)</name>
    <name type="common">Agrobacterium tumefaciens (strain C58)</name>
    <dbReference type="NCBI Taxonomy" id="176299"/>
    <lineage>
        <taxon>Bacteria</taxon>
        <taxon>Pseudomonadati</taxon>
        <taxon>Pseudomonadota</taxon>
        <taxon>Alphaproteobacteria</taxon>
        <taxon>Hyphomicrobiales</taxon>
        <taxon>Rhizobiaceae</taxon>
        <taxon>Rhizobium/Agrobacterium group</taxon>
        <taxon>Agrobacterium</taxon>
        <taxon>Agrobacterium tumefaciens complex</taxon>
    </lineage>
</organism>
<accession>Q8UGK2</accession>